<feature type="chain" id="PRO_0000151219" description="Undecaprenyl-diphosphatase">
    <location>
        <begin position="1"/>
        <end position="279"/>
    </location>
</feature>
<feature type="transmembrane region" description="Helical" evidence="1">
    <location>
        <begin position="2"/>
        <end position="22"/>
    </location>
</feature>
<feature type="transmembrane region" description="Helical" evidence="1">
    <location>
        <begin position="44"/>
        <end position="64"/>
    </location>
</feature>
<feature type="transmembrane region" description="Helical" evidence="1">
    <location>
        <begin position="85"/>
        <end position="105"/>
    </location>
</feature>
<feature type="transmembrane region" description="Helical" evidence="1">
    <location>
        <begin position="113"/>
        <end position="133"/>
    </location>
</feature>
<feature type="transmembrane region" description="Helical" evidence="1">
    <location>
        <begin position="163"/>
        <end position="183"/>
    </location>
</feature>
<feature type="transmembrane region" description="Helical" evidence="1">
    <location>
        <begin position="188"/>
        <end position="208"/>
    </location>
</feature>
<feature type="transmembrane region" description="Helical" evidence="1">
    <location>
        <begin position="223"/>
        <end position="243"/>
    </location>
</feature>
<feature type="transmembrane region" description="Helical" evidence="1">
    <location>
        <begin position="255"/>
        <end position="275"/>
    </location>
</feature>
<keyword id="KW-0046">Antibiotic resistance</keyword>
<keyword id="KW-1003">Cell membrane</keyword>
<keyword id="KW-0133">Cell shape</keyword>
<keyword id="KW-0961">Cell wall biogenesis/degradation</keyword>
<keyword id="KW-0378">Hydrolase</keyword>
<keyword id="KW-0472">Membrane</keyword>
<keyword id="KW-0573">Peptidoglycan synthesis</keyword>
<keyword id="KW-0812">Transmembrane</keyword>
<keyword id="KW-1133">Transmembrane helix</keyword>
<reference key="1">
    <citation type="journal article" date="2002" name="Proc. Natl. Acad. Sci. U.S.A.">
        <title>Genome sequence and comparative microarray analysis of serotype M18 group A Streptococcus strains associated with acute rheumatic fever outbreaks.</title>
        <authorList>
            <person name="Smoot J.C."/>
            <person name="Barbian K.D."/>
            <person name="Van Gompel J.J."/>
            <person name="Smoot L.M."/>
            <person name="Chaussee M.S."/>
            <person name="Sylva G.L."/>
            <person name="Sturdevant D.E."/>
            <person name="Ricklefs S.M."/>
            <person name="Porcella S.F."/>
            <person name="Parkins L.D."/>
            <person name="Beres S.B."/>
            <person name="Campbell D.S."/>
            <person name="Smith T.M."/>
            <person name="Zhang Q."/>
            <person name="Kapur V."/>
            <person name="Daly J.A."/>
            <person name="Veasy L.G."/>
            <person name="Musser J.M."/>
        </authorList>
    </citation>
    <scope>NUCLEOTIDE SEQUENCE [LARGE SCALE GENOMIC DNA]</scope>
    <source>
        <strain>MGAS8232</strain>
    </source>
</reference>
<dbReference type="EC" id="3.6.1.27" evidence="1"/>
<dbReference type="EMBL" id="AE009949">
    <property type="protein sequence ID" value="AAL97046.1"/>
    <property type="molecule type" value="Genomic_DNA"/>
</dbReference>
<dbReference type="RefSeq" id="WP_002986031.1">
    <property type="nucleotide sequence ID" value="NC_003485.1"/>
</dbReference>
<dbReference type="SMR" id="P67394"/>
<dbReference type="KEGG" id="spm:spyM18_0268"/>
<dbReference type="HOGENOM" id="CLU_060296_2_0_9"/>
<dbReference type="GO" id="GO:0005886">
    <property type="term" value="C:plasma membrane"/>
    <property type="evidence" value="ECO:0007669"/>
    <property type="project" value="UniProtKB-SubCell"/>
</dbReference>
<dbReference type="GO" id="GO:0050380">
    <property type="term" value="F:undecaprenyl-diphosphatase activity"/>
    <property type="evidence" value="ECO:0007669"/>
    <property type="project" value="UniProtKB-UniRule"/>
</dbReference>
<dbReference type="GO" id="GO:0071555">
    <property type="term" value="P:cell wall organization"/>
    <property type="evidence" value="ECO:0007669"/>
    <property type="project" value="UniProtKB-KW"/>
</dbReference>
<dbReference type="GO" id="GO:0009252">
    <property type="term" value="P:peptidoglycan biosynthetic process"/>
    <property type="evidence" value="ECO:0007669"/>
    <property type="project" value="UniProtKB-KW"/>
</dbReference>
<dbReference type="GO" id="GO:0008360">
    <property type="term" value="P:regulation of cell shape"/>
    <property type="evidence" value="ECO:0007669"/>
    <property type="project" value="UniProtKB-KW"/>
</dbReference>
<dbReference type="GO" id="GO:0046677">
    <property type="term" value="P:response to antibiotic"/>
    <property type="evidence" value="ECO:0007669"/>
    <property type="project" value="UniProtKB-UniRule"/>
</dbReference>
<dbReference type="HAMAP" id="MF_01006">
    <property type="entry name" value="Undec_diphosphatase"/>
    <property type="match status" value="1"/>
</dbReference>
<dbReference type="InterPro" id="IPR003824">
    <property type="entry name" value="UppP"/>
</dbReference>
<dbReference type="NCBIfam" id="NF001391">
    <property type="entry name" value="PRK00281.1-5"/>
    <property type="match status" value="1"/>
</dbReference>
<dbReference type="PANTHER" id="PTHR30622">
    <property type="entry name" value="UNDECAPRENYL-DIPHOSPHATASE"/>
    <property type="match status" value="1"/>
</dbReference>
<dbReference type="PANTHER" id="PTHR30622:SF3">
    <property type="entry name" value="UNDECAPRENYL-DIPHOSPHATASE"/>
    <property type="match status" value="1"/>
</dbReference>
<dbReference type="Pfam" id="PF02673">
    <property type="entry name" value="BacA"/>
    <property type="match status" value="1"/>
</dbReference>
<gene>
    <name evidence="1" type="primary">uppP</name>
    <name type="synonym">bacA</name>
    <name type="synonym">upk</name>
    <name type="ordered locus">spyM18_0268</name>
</gene>
<organism>
    <name type="scientific">Streptococcus pyogenes serotype M18 (strain MGAS8232)</name>
    <dbReference type="NCBI Taxonomy" id="186103"/>
    <lineage>
        <taxon>Bacteria</taxon>
        <taxon>Bacillati</taxon>
        <taxon>Bacillota</taxon>
        <taxon>Bacilli</taxon>
        <taxon>Lactobacillales</taxon>
        <taxon>Streptococcaceae</taxon>
        <taxon>Streptococcus</taxon>
    </lineage>
</organism>
<proteinExistence type="inferred from homology"/>
<evidence type="ECO:0000255" key="1">
    <source>
        <dbReference type="HAMAP-Rule" id="MF_01006"/>
    </source>
</evidence>
<name>UPPP_STRP8</name>
<comment type="function">
    <text evidence="1">Catalyzes the dephosphorylation of undecaprenyl diphosphate (UPP). Confers resistance to bacitracin.</text>
</comment>
<comment type="catalytic activity">
    <reaction evidence="1">
        <text>di-trans,octa-cis-undecaprenyl diphosphate + H2O = di-trans,octa-cis-undecaprenyl phosphate + phosphate + H(+)</text>
        <dbReference type="Rhea" id="RHEA:28094"/>
        <dbReference type="ChEBI" id="CHEBI:15377"/>
        <dbReference type="ChEBI" id="CHEBI:15378"/>
        <dbReference type="ChEBI" id="CHEBI:43474"/>
        <dbReference type="ChEBI" id="CHEBI:58405"/>
        <dbReference type="ChEBI" id="CHEBI:60392"/>
        <dbReference type="EC" id="3.6.1.27"/>
    </reaction>
</comment>
<comment type="subcellular location">
    <subcellularLocation>
        <location evidence="1">Cell membrane</location>
        <topology evidence="1">Multi-pass membrane protein</topology>
    </subcellularLocation>
</comment>
<comment type="miscellaneous">
    <text>Bacitracin is thought to be involved in the inhibition of peptidoglycan synthesis by sequestering undecaprenyl diphosphate, thereby reducing the pool of lipid carrier available.</text>
</comment>
<comment type="similarity">
    <text evidence="1">Belongs to the UppP family.</text>
</comment>
<accession>P67394</accession>
<accession>Q9A1G8</accession>
<sequence>MLIIELLKAIFFGIIEGITEWLPVSSTGHLILVQEFIRLNQDKAFIEMFNIVIQLGAIIAVMLIYFERLNPFQPGKTAREVQLTWQLWLKVVIACIPSILIAVPLDNWFEAHFYFMVPIAIALIVYGIAFIWIEKRNAQQEPAVTELARMSYKTAFFIGCFQVLSIVPGTSRSGATILGAIILGTSRTVAADFTFFLAIPTMFGYSGLKAVKFFLDGHHLDFAQVLILLVASLTAFVVSLLAIRFLTDYVKKHDFTIFGKYRIVLGSLLLIYSFFKFVF</sequence>
<protein>
    <recommendedName>
        <fullName evidence="1">Undecaprenyl-diphosphatase</fullName>
        <ecNumber evidence="1">3.6.1.27</ecNumber>
    </recommendedName>
    <alternativeName>
        <fullName evidence="1">Bacitracin resistance protein</fullName>
    </alternativeName>
    <alternativeName>
        <fullName evidence="1">Undecaprenyl pyrophosphate phosphatase</fullName>
    </alternativeName>
</protein>